<feature type="chain" id="PRO_1000188235" description="Pyridoxal 5'-phosphate synthase subunit PdxS">
    <location>
        <begin position="1"/>
        <end position="299"/>
    </location>
</feature>
<feature type="active site" description="Schiff-base intermediate with D-ribose 5-phosphate" evidence="1">
    <location>
        <position position="86"/>
    </location>
</feature>
<feature type="binding site" evidence="1">
    <location>
        <position position="29"/>
    </location>
    <ligand>
        <name>D-ribose 5-phosphate</name>
        <dbReference type="ChEBI" id="CHEBI:78346"/>
    </ligand>
</feature>
<feature type="binding site" evidence="1">
    <location>
        <position position="158"/>
    </location>
    <ligand>
        <name>D-ribose 5-phosphate</name>
        <dbReference type="ChEBI" id="CHEBI:78346"/>
    </ligand>
</feature>
<feature type="binding site" evidence="1">
    <location>
        <position position="170"/>
    </location>
    <ligand>
        <name>D-glyceraldehyde 3-phosphate</name>
        <dbReference type="ChEBI" id="CHEBI:59776"/>
    </ligand>
</feature>
<feature type="binding site" evidence="1">
    <location>
        <position position="219"/>
    </location>
    <ligand>
        <name>D-ribose 5-phosphate</name>
        <dbReference type="ChEBI" id="CHEBI:78346"/>
    </ligand>
</feature>
<feature type="binding site" evidence="1">
    <location>
        <begin position="240"/>
        <end position="241"/>
    </location>
    <ligand>
        <name>D-ribose 5-phosphate</name>
        <dbReference type="ChEBI" id="CHEBI:78346"/>
    </ligand>
</feature>
<evidence type="ECO:0000255" key="1">
    <source>
        <dbReference type="HAMAP-Rule" id="MF_01824"/>
    </source>
</evidence>
<reference key="1">
    <citation type="journal article" date="2009" name="Vaccine">
        <title>Whole genome sequence analysis of Mycobacterium bovis bacillus Calmette-Guerin (BCG) Tokyo 172: a comparative study of BCG vaccine substrains.</title>
        <authorList>
            <person name="Seki M."/>
            <person name="Honda I."/>
            <person name="Fujita I."/>
            <person name="Yano I."/>
            <person name="Yamamoto S."/>
            <person name="Koyama A."/>
        </authorList>
    </citation>
    <scope>NUCLEOTIDE SEQUENCE [LARGE SCALE GENOMIC DNA]</scope>
    <source>
        <strain>BCG / Tokyo 172 / ATCC 35737 / TMC 1019</strain>
    </source>
</reference>
<proteinExistence type="inferred from homology"/>
<name>PDXS_MYCBT</name>
<protein>
    <recommendedName>
        <fullName evidence="1">Pyridoxal 5'-phosphate synthase subunit PdxS</fullName>
        <shortName evidence="1">PLP synthase subunit PdxS</shortName>
        <ecNumber evidence="1">4.3.3.6</ecNumber>
    </recommendedName>
    <alternativeName>
        <fullName evidence="1">Pdx1</fullName>
    </alternativeName>
</protein>
<dbReference type="EC" id="4.3.3.6" evidence="1"/>
<dbReference type="EMBL" id="AP010918">
    <property type="protein sequence ID" value="BAH26906.1"/>
    <property type="molecule type" value="Genomic_DNA"/>
</dbReference>
<dbReference type="RefSeq" id="WP_003413468.1">
    <property type="nucleotide sequence ID" value="NZ_CP014566.1"/>
</dbReference>
<dbReference type="SMR" id="C1AF77"/>
<dbReference type="GeneID" id="45426609"/>
<dbReference type="KEGG" id="mbt:JTY_2625"/>
<dbReference type="HOGENOM" id="CLU_055352_1_0_11"/>
<dbReference type="UniPathway" id="UPA00245"/>
<dbReference type="GO" id="GO:0036381">
    <property type="term" value="F:pyridoxal 5'-phosphate synthase (glutamine hydrolysing) activity"/>
    <property type="evidence" value="ECO:0007669"/>
    <property type="project" value="UniProtKB-UniRule"/>
</dbReference>
<dbReference type="GO" id="GO:0006520">
    <property type="term" value="P:amino acid metabolic process"/>
    <property type="evidence" value="ECO:0007669"/>
    <property type="project" value="TreeGrafter"/>
</dbReference>
<dbReference type="GO" id="GO:0042823">
    <property type="term" value="P:pyridoxal phosphate biosynthetic process"/>
    <property type="evidence" value="ECO:0007669"/>
    <property type="project" value="UniProtKB-UniRule"/>
</dbReference>
<dbReference type="GO" id="GO:0008615">
    <property type="term" value="P:pyridoxine biosynthetic process"/>
    <property type="evidence" value="ECO:0007669"/>
    <property type="project" value="TreeGrafter"/>
</dbReference>
<dbReference type="CDD" id="cd04727">
    <property type="entry name" value="pdxS"/>
    <property type="match status" value="1"/>
</dbReference>
<dbReference type="FunFam" id="3.20.20.70:FF:000001">
    <property type="entry name" value="Pyridoxine biosynthesis protein PDX1"/>
    <property type="match status" value="1"/>
</dbReference>
<dbReference type="Gene3D" id="3.20.20.70">
    <property type="entry name" value="Aldolase class I"/>
    <property type="match status" value="1"/>
</dbReference>
<dbReference type="HAMAP" id="MF_01824">
    <property type="entry name" value="PdxS"/>
    <property type="match status" value="1"/>
</dbReference>
<dbReference type="InterPro" id="IPR013785">
    <property type="entry name" value="Aldolase_TIM"/>
</dbReference>
<dbReference type="InterPro" id="IPR001852">
    <property type="entry name" value="PdxS/SNZ"/>
</dbReference>
<dbReference type="InterPro" id="IPR033755">
    <property type="entry name" value="PdxS/SNZ_N"/>
</dbReference>
<dbReference type="InterPro" id="IPR011060">
    <property type="entry name" value="RibuloseP-bd_barrel"/>
</dbReference>
<dbReference type="NCBIfam" id="NF003215">
    <property type="entry name" value="PRK04180.1"/>
    <property type="match status" value="1"/>
</dbReference>
<dbReference type="NCBIfam" id="TIGR00343">
    <property type="entry name" value="pyridoxal 5'-phosphate synthase lyase subunit PdxS"/>
    <property type="match status" value="1"/>
</dbReference>
<dbReference type="PANTHER" id="PTHR31829">
    <property type="entry name" value="PYRIDOXAL 5'-PHOSPHATE SYNTHASE SUBUNIT SNZ1-RELATED"/>
    <property type="match status" value="1"/>
</dbReference>
<dbReference type="PANTHER" id="PTHR31829:SF0">
    <property type="entry name" value="PYRIDOXAL 5'-PHOSPHATE SYNTHASE SUBUNIT SNZ1-RELATED"/>
    <property type="match status" value="1"/>
</dbReference>
<dbReference type="Pfam" id="PF01680">
    <property type="entry name" value="SOR_SNZ"/>
    <property type="match status" value="1"/>
</dbReference>
<dbReference type="PIRSF" id="PIRSF029271">
    <property type="entry name" value="Pdx1"/>
    <property type="match status" value="1"/>
</dbReference>
<dbReference type="SUPFAM" id="SSF51366">
    <property type="entry name" value="Ribulose-phoshate binding barrel"/>
    <property type="match status" value="1"/>
</dbReference>
<dbReference type="PROSITE" id="PS01235">
    <property type="entry name" value="PDXS_SNZ_1"/>
    <property type="match status" value="1"/>
</dbReference>
<dbReference type="PROSITE" id="PS51129">
    <property type="entry name" value="PDXS_SNZ_2"/>
    <property type="match status" value="1"/>
</dbReference>
<sequence length="299" mass="31365">MDPAGNPATGTARVKRGMAEMLKGGVIMDVVTPEQARIAEGAGAVAVMALERVPADIRAQGGVSRMSDPDMIEGIIAAVTIPVMAKVRIGHFVEAQILQTLGVDYIDESEVLTPADYAHHIDKWNFTVPFVCGATNLGEALRRISEGAAMIRSKGEAGTGDVSNATTHMRAIGGEIRRLTSMSEDELFVAAKELQAPYELVAEVARAGKLPVTLFTAGGIATPADAAMMMQLGAEGVFVGSGIFKSGAPEHRAAAIVKATTFFDDPDVLAKVSRGLGEAMVGINVDEIAVGHRLAQRGW</sequence>
<organism>
    <name type="scientific">Mycobacterium bovis (strain BCG / Tokyo 172 / ATCC 35737 / TMC 1019)</name>
    <dbReference type="NCBI Taxonomy" id="561275"/>
    <lineage>
        <taxon>Bacteria</taxon>
        <taxon>Bacillati</taxon>
        <taxon>Actinomycetota</taxon>
        <taxon>Actinomycetes</taxon>
        <taxon>Mycobacteriales</taxon>
        <taxon>Mycobacteriaceae</taxon>
        <taxon>Mycobacterium</taxon>
        <taxon>Mycobacterium tuberculosis complex</taxon>
    </lineage>
</organism>
<comment type="function">
    <text evidence="1">Catalyzes the formation of pyridoxal 5'-phosphate from ribose 5-phosphate (RBP), glyceraldehyde 3-phosphate (G3P) and ammonia. The ammonia is provided by the PdxT subunit. Can also use ribulose 5-phosphate and dihydroxyacetone phosphate as substrates, resulting from enzyme-catalyzed isomerization of RBP and G3P, respectively.</text>
</comment>
<comment type="catalytic activity">
    <reaction evidence="1">
        <text>aldehydo-D-ribose 5-phosphate + D-glyceraldehyde 3-phosphate + L-glutamine = pyridoxal 5'-phosphate + L-glutamate + phosphate + 3 H2O + H(+)</text>
        <dbReference type="Rhea" id="RHEA:31507"/>
        <dbReference type="ChEBI" id="CHEBI:15377"/>
        <dbReference type="ChEBI" id="CHEBI:15378"/>
        <dbReference type="ChEBI" id="CHEBI:29985"/>
        <dbReference type="ChEBI" id="CHEBI:43474"/>
        <dbReference type="ChEBI" id="CHEBI:58273"/>
        <dbReference type="ChEBI" id="CHEBI:58359"/>
        <dbReference type="ChEBI" id="CHEBI:59776"/>
        <dbReference type="ChEBI" id="CHEBI:597326"/>
        <dbReference type="EC" id="4.3.3.6"/>
    </reaction>
</comment>
<comment type="pathway">
    <text evidence="1">Cofactor biosynthesis; pyridoxal 5'-phosphate biosynthesis.</text>
</comment>
<comment type="subunit">
    <text evidence="1">In the presence of PdxT, forms a dodecamer of heterodimers.</text>
</comment>
<comment type="similarity">
    <text evidence="1">Belongs to the PdxS/SNZ family.</text>
</comment>
<gene>
    <name evidence="1" type="primary">pdxS</name>
    <name type="ordered locus">JTY_2625</name>
</gene>
<accession>C1AF77</accession>
<keyword id="KW-0456">Lyase</keyword>
<keyword id="KW-0663">Pyridoxal phosphate</keyword>
<keyword id="KW-0704">Schiff base</keyword>